<reference evidence="6 7" key="1">
    <citation type="journal article" date="2003" name="J. Biol. Chem.">
        <title>A new class of N-hydroxycinnamoyltransferases. Purification, cloning, and expression of a barley agmatine coumaroyltransferase (EC 2.3.1.64).</title>
        <authorList>
            <person name="Burhenne K."/>
            <person name="Kristensen B.K."/>
            <person name="Rasmussen S.K."/>
        </authorList>
    </citation>
    <scope>NUCLEOTIDE SEQUENCE [MRNA]</scope>
    <scope>PROTEIN SEQUENCE OF 1-15</scope>
    <scope>FUNCTION</scope>
    <scope>CATALYTIC ACTIVITY</scope>
    <scope>ACTIVITY REGULATION</scope>
    <scope>BIOPHYSICOCHEMICAL PROPERTIES</scope>
    <scope>SUBUNIT</scope>
    <source>
        <strain evidence="2">cv. Triumph</strain>
        <tissue evidence="7">Leaf</tissue>
    </source>
</reference>
<reference evidence="8" key="2">
    <citation type="journal article" date="2007" name="Genes Genet. Syst.">
        <title>Chromosome arm location of the genes for the biosynthesis of hordatines in barley.</title>
        <authorList>
            <person name="Nomura T."/>
            <person name="Ishizuka A."/>
            <person name="Kishida K."/>
            <person name="Islam A.K.M.R."/>
            <person name="Endo T.R."/>
            <person name="Iwamura H."/>
            <person name="Ishihara A."/>
        </authorList>
    </citation>
    <scope>NUCLEOTIDE SEQUENCE [MRNA]</scope>
    <source>
        <strain evidence="3">cv. Betzes</strain>
        <tissue evidence="8">Shoot</tissue>
    </source>
</reference>
<reference evidence="6" key="3">
    <citation type="journal article" date="1983" name="Phytochemistry">
        <title>Agmatine coumaroyltransferase from barley seedlings.</title>
        <authorList>
            <person name="Bird C.R."/>
            <person name="Smith T.A."/>
        </authorList>
    </citation>
    <scope>FUNCTION</scope>
    <scope>CATALYTIC ACTIVITY</scope>
    <scope>BIOPHYSICOCHEMICAL PROPERTIES</scope>
    <source>
        <strain evidence="4">cv. Proctor</strain>
    </source>
</reference>
<gene>
    <name type="primary">ACT-1</name>
    <name evidence="7" type="synonym">ACT</name>
</gene>
<accession>A9ZPJ6</accession>
<accession>Q84QG6</accession>
<name>AGCT1_HORVU</name>
<sequence>MKITVHSSKAVKPEYGACGLAPGCTADVVPLTVLDKANFDTYISVIYAFHAPAPPNAVLEAGLGRALVDYREWAGRLGVDASGGRAILLNDAGARFVEATADVALDSVMPLKPTSEVLSLHPSGDDGPEELMLIQVTRFACGSLVVGFTTQHIVSDGRSTGNFFVAWSQATRGAAIDPVPVHDRASFFHPREPLHVEYEHRGVEFKPCEKAHDVVCGADGDEDEVVVNKVHFSREFISKLKAHASAGAPRPCSTLQCVVAHLWRSMTMARGLDGGETTSVAIAVDGRARMSPQVPDGYTGNVILWARPTTTAGELVTRPVKHAVELISREVARINDGYFKSFIDFANSGAVEKERLVATADAADMVLSPNIEVDSWLRIPFYDMDFGGGRPFFFMPSYLPVEGLLILLPSFLGDGSVDAYVPLFSRDMNTFKNCCYSLD</sequence>
<dbReference type="EC" id="2.3.1.64"/>
<dbReference type="EMBL" id="AY228552">
    <property type="protein sequence ID" value="AAO73071.1"/>
    <property type="molecule type" value="mRNA"/>
</dbReference>
<dbReference type="EMBL" id="AB334132">
    <property type="protein sequence ID" value="BAF97626.1"/>
    <property type="molecule type" value="mRNA"/>
</dbReference>
<dbReference type="PDB" id="7CYS">
    <property type="method" value="X-ray"/>
    <property type="resolution" value="1.81 A"/>
    <property type="chains" value="A=2-439"/>
</dbReference>
<dbReference type="PDBsum" id="7CYS"/>
<dbReference type="SMR" id="A9ZPJ6"/>
<dbReference type="BioCyc" id="MetaCyc:MONOMER-15451"/>
<dbReference type="BRENDA" id="2.3.1.64">
    <property type="organism ID" value="2687"/>
</dbReference>
<dbReference type="ExpressionAtlas" id="A9ZPJ6">
    <property type="expression patterns" value="baseline"/>
</dbReference>
<dbReference type="GO" id="GO:0047634">
    <property type="term" value="F:agmatine N4-coumaroyltransferase activity"/>
    <property type="evidence" value="ECO:0000314"/>
    <property type="project" value="UniProtKB"/>
</dbReference>
<dbReference type="FunFam" id="3.30.559.10:FF:000008">
    <property type="entry name" value="Tryptamine hydroxycinnamoyl transferase"/>
    <property type="match status" value="1"/>
</dbReference>
<dbReference type="FunFam" id="3.30.559.10:FF:000014">
    <property type="entry name" value="Tryptamine hydroxycinnamoyl transferase"/>
    <property type="match status" value="1"/>
</dbReference>
<dbReference type="Gene3D" id="3.30.559.10">
    <property type="entry name" value="Chloramphenicol acetyltransferase-like domain"/>
    <property type="match status" value="2"/>
</dbReference>
<dbReference type="InterPro" id="IPR023213">
    <property type="entry name" value="CAT-like_dom_sf"/>
</dbReference>
<dbReference type="InterPro" id="IPR050317">
    <property type="entry name" value="Plant_Fungal_Acyltransferase"/>
</dbReference>
<dbReference type="PANTHER" id="PTHR31642:SF13">
    <property type="entry name" value="AGMATINE HYDROXYCINNAMOYLTRANSFERASE 1"/>
    <property type="match status" value="1"/>
</dbReference>
<dbReference type="PANTHER" id="PTHR31642">
    <property type="entry name" value="TRICHOTHECENE 3-O-ACETYLTRANSFERASE"/>
    <property type="match status" value="1"/>
</dbReference>
<dbReference type="Pfam" id="PF02458">
    <property type="entry name" value="Transferase"/>
    <property type="match status" value="1"/>
</dbReference>
<protein>
    <recommendedName>
        <fullName evidence="5 8">Agmatine coumaroyltransferase-1</fullName>
        <ecNumber>2.3.1.64</ecNumber>
    </recommendedName>
</protein>
<comment type="function">
    <text evidence="2 4">Involved in the synthesis of hordatines (antifungal hydroxycinnamoylagmatine derivatives). Specific for agmatine as the acyl acceptor, inactive towards tyramine and putrescine. Has activity with the acyl donors 4-coumaroyl-CoA, cinnamoyl-CoA, caffeoyl-CoA, feruloyl-CoA, and to a lesser extent sinapoyl-CoA.</text>
</comment>
<comment type="catalytic activity">
    <reaction evidence="2 4">
        <text>4-coumaroyl-CoA + agmatine = N-(4-guanidinobutyl)-4-hydroxycinnamamide + CoA + H(+)</text>
        <dbReference type="Rhea" id="RHEA:13405"/>
        <dbReference type="ChEBI" id="CHEBI:15378"/>
        <dbReference type="ChEBI" id="CHEBI:57287"/>
        <dbReference type="ChEBI" id="CHEBI:57355"/>
        <dbReference type="ChEBI" id="CHEBI:58145"/>
        <dbReference type="ChEBI" id="CHEBI:58644"/>
        <dbReference type="EC" id="2.3.1.64"/>
    </reaction>
</comment>
<comment type="activity regulation">
    <text evidence="2">Inhibited by DEPC. Completely inhibited by ZnSO(4), strongly inhibited by CuSO(4), partially inhibited by MnCl(2). Unaffected by MgCl(2) or CaCl(2).</text>
</comment>
<comment type="biophysicochemical properties">
    <kinetics>
        <KM evidence="2 4">8.1 uM for agmatine</KM>
        <KM evidence="2 4">2.1 uM for 4-coumaroyl-CoA</KM>
        <KM evidence="2 4">6.6 uM for feruloyl-CoA</KM>
        <KM evidence="2 4">4.3 uM for caffeoyl-CoA</KM>
    </kinetics>
    <phDependence>
        <text evidence="2 4">Optimum pH is 7.5. Half maximum activity is seen at pH 6.9 and 8.1.</text>
    </phDependence>
    <temperatureDependence>
        <text evidence="2 4">Optimum temperature is 40 degrees Celsius.</text>
    </temperatureDependence>
</comment>
<comment type="subunit">
    <text evidence="2">Monomer.</text>
</comment>
<comment type="similarity">
    <text evidence="1">Belongs to the plant acyltransferase family.</text>
</comment>
<feature type="chain" id="PRO_0000405023" description="Agmatine coumaroyltransferase-1">
    <location>
        <begin position="1"/>
        <end position="439"/>
    </location>
</feature>
<feature type="active site" description="Proton acceptor" evidence="1">
    <location>
        <position position="152"/>
    </location>
</feature>
<feature type="active site" description="Proton acceptor" evidence="1">
    <location>
        <position position="385"/>
    </location>
</feature>
<feature type="sequence variant" description="In strain: cv. Triumph." evidence="2">
    <original>C</original>
    <variation>Y</variation>
    <location>
        <position position="208"/>
    </location>
</feature>
<feature type="sequence variant" description="In strain: cv. Triumph." evidence="2">
    <original>H</original>
    <variation>Q</variation>
    <location>
        <position position="243"/>
    </location>
</feature>
<feature type="sequence variant" description="In strain: cv. Triumph." evidence="2">
    <original>R</original>
    <variation>L</variation>
    <location>
        <position position="378"/>
    </location>
</feature>
<feature type="strand" evidence="9">
    <location>
        <begin position="3"/>
        <end position="11"/>
    </location>
</feature>
<feature type="helix" evidence="9">
    <location>
        <begin position="15"/>
        <end position="18"/>
    </location>
</feature>
<feature type="strand" evidence="9">
    <location>
        <begin position="28"/>
        <end position="30"/>
    </location>
</feature>
<feature type="turn" evidence="9">
    <location>
        <begin position="33"/>
        <end position="37"/>
    </location>
</feature>
<feature type="strand" evidence="9">
    <location>
        <begin position="41"/>
        <end position="49"/>
    </location>
</feature>
<feature type="helix" evidence="9">
    <location>
        <begin position="56"/>
        <end position="67"/>
    </location>
</feature>
<feature type="helix" evidence="9">
    <location>
        <begin position="71"/>
        <end position="74"/>
    </location>
</feature>
<feature type="strand" evidence="9">
    <location>
        <begin position="75"/>
        <end position="79"/>
    </location>
</feature>
<feature type="strand" evidence="9">
    <location>
        <begin position="85"/>
        <end position="88"/>
    </location>
</feature>
<feature type="strand" evidence="9">
    <location>
        <begin position="94"/>
        <end position="103"/>
    </location>
</feature>
<feature type="helix" evidence="9">
    <location>
        <begin position="105"/>
        <end position="108"/>
    </location>
</feature>
<feature type="helix" evidence="9">
    <location>
        <begin position="115"/>
        <end position="120"/>
    </location>
</feature>
<feature type="strand" evidence="9">
    <location>
        <begin position="124"/>
        <end position="126"/>
    </location>
</feature>
<feature type="strand" evidence="9">
    <location>
        <begin position="131"/>
        <end position="138"/>
    </location>
</feature>
<feature type="strand" evidence="9">
    <location>
        <begin position="144"/>
        <end position="151"/>
    </location>
</feature>
<feature type="turn" evidence="9">
    <location>
        <begin position="152"/>
        <end position="154"/>
    </location>
</feature>
<feature type="helix" evidence="9">
    <location>
        <begin position="157"/>
        <end position="172"/>
    </location>
</feature>
<feature type="helix" evidence="9">
    <location>
        <begin position="184"/>
        <end position="186"/>
    </location>
</feature>
<feature type="turn" evidence="9">
    <location>
        <begin position="202"/>
        <end position="204"/>
    </location>
</feature>
<feature type="strand" evidence="9">
    <location>
        <begin position="205"/>
        <end position="207"/>
    </location>
</feature>
<feature type="strand" evidence="9">
    <location>
        <begin position="225"/>
        <end position="232"/>
    </location>
</feature>
<feature type="helix" evidence="9">
    <location>
        <begin position="234"/>
        <end position="245"/>
    </location>
</feature>
<feature type="helix" evidence="9">
    <location>
        <begin position="254"/>
        <end position="270"/>
    </location>
</feature>
<feature type="strand" evidence="9">
    <location>
        <begin position="277"/>
        <end position="285"/>
    </location>
</feature>
<feature type="turn" evidence="9">
    <location>
        <begin position="287"/>
        <end position="289"/>
    </location>
</feature>
<feature type="strand" evidence="9">
    <location>
        <begin position="290"/>
        <end position="292"/>
    </location>
</feature>
<feature type="strand" evidence="9">
    <location>
        <begin position="303"/>
        <end position="306"/>
    </location>
</feature>
<feature type="strand" evidence="9">
    <location>
        <begin position="309"/>
        <end position="311"/>
    </location>
</feature>
<feature type="helix" evidence="9">
    <location>
        <begin position="312"/>
        <end position="317"/>
    </location>
</feature>
<feature type="helix" evidence="9">
    <location>
        <begin position="320"/>
        <end position="333"/>
    </location>
</feature>
<feature type="helix" evidence="9">
    <location>
        <begin position="336"/>
        <end position="346"/>
    </location>
</feature>
<feature type="helix" evidence="9">
    <location>
        <begin position="350"/>
        <end position="353"/>
    </location>
</feature>
<feature type="strand" evidence="9">
    <location>
        <begin position="356"/>
        <end position="359"/>
    </location>
</feature>
<feature type="strand" evidence="9">
    <location>
        <begin position="371"/>
        <end position="375"/>
    </location>
</feature>
<feature type="strand" evidence="9">
    <location>
        <begin position="386"/>
        <end position="388"/>
    </location>
</feature>
<feature type="strand" evidence="9">
    <location>
        <begin position="392"/>
        <end position="396"/>
    </location>
</feature>
<feature type="strand" evidence="9">
    <location>
        <begin position="404"/>
        <end position="409"/>
    </location>
</feature>
<feature type="strand" evidence="9">
    <location>
        <begin position="417"/>
        <end position="424"/>
    </location>
</feature>
<feature type="helix" evidence="9">
    <location>
        <begin position="425"/>
        <end position="427"/>
    </location>
</feature>
<feature type="helix" evidence="9">
    <location>
        <begin position="428"/>
        <end position="435"/>
    </location>
</feature>
<evidence type="ECO:0000255" key="1"/>
<evidence type="ECO:0000269" key="2">
    <source>
    </source>
</evidence>
<evidence type="ECO:0000269" key="3">
    <source>
    </source>
</evidence>
<evidence type="ECO:0000269" key="4">
    <source ref="3"/>
</evidence>
<evidence type="ECO:0000303" key="5">
    <source>
    </source>
</evidence>
<evidence type="ECO:0000305" key="6"/>
<evidence type="ECO:0000312" key="7">
    <source>
        <dbReference type="EMBL" id="AAO73071.1"/>
    </source>
</evidence>
<evidence type="ECO:0000312" key="8">
    <source>
        <dbReference type="EMBL" id="BAF97626.1"/>
    </source>
</evidence>
<evidence type="ECO:0007829" key="9">
    <source>
        <dbReference type="PDB" id="7CYS"/>
    </source>
</evidence>
<keyword id="KW-0002">3D-structure</keyword>
<keyword id="KW-0012">Acyltransferase</keyword>
<keyword id="KW-0903">Direct protein sequencing</keyword>
<keyword id="KW-0808">Transferase</keyword>
<proteinExistence type="evidence at protein level"/>
<organism>
    <name type="scientific">Hordeum vulgare</name>
    <name type="common">Barley</name>
    <dbReference type="NCBI Taxonomy" id="4513"/>
    <lineage>
        <taxon>Eukaryota</taxon>
        <taxon>Viridiplantae</taxon>
        <taxon>Streptophyta</taxon>
        <taxon>Embryophyta</taxon>
        <taxon>Tracheophyta</taxon>
        <taxon>Spermatophyta</taxon>
        <taxon>Magnoliopsida</taxon>
        <taxon>Liliopsida</taxon>
        <taxon>Poales</taxon>
        <taxon>Poaceae</taxon>
        <taxon>BOP clade</taxon>
        <taxon>Pooideae</taxon>
        <taxon>Triticodae</taxon>
        <taxon>Triticeae</taxon>
        <taxon>Hordeinae</taxon>
        <taxon>Hordeum</taxon>
    </lineage>
</organism>